<comment type="function">
    <text evidence="2">Protease subunit of a proteasome-like degradation complex believed to be a general protein degrading machinery.</text>
</comment>
<comment type="catalytic activity">
    <reaction evidence="2">
        <text>ATP-dependent cleavage of peptide bonds with broad specificity.</text>
        <dbReference type="EC" id="3.4.25.2"/>
    </reaction>
</comment>
<comment type="activity regulation">
    <text evidence="2">Allosterically activated by HslU binding.</text>
</comment>
<comment type="subunit">
    <text evidence="2">A double ring-shaped homohexamer of HslV is capped on each side by a ring-shaped HslU homohexamer. The assembly of the HslU/HslV complex is dependent on binding of ATP.</text>
</comment>
<comment type="subcellular location">
    <subcellularLocation>
        <location evidence="2">Cytoplasm</location>
    </subcellularLocation>
</comment>
<comment type="similarity">
    <text evidence="2">Belongs to the peptidase T1B family. HslV subfamily.</text>
</comment>
<dbReference type="EC" id="3.4.25.2" evidence="2"/>
<dbReference type="EMBL" id="BA000037">
    <property type="protein sequence ID" value="BAC95779.1"/>
    <property type="molecule type" value="Genomic_DNA"/>
</dbReference>
<dbReference type="RefSeq" id="WP_011079332.1">
    <property type="nucleotide sequence ID" value="NC_005139.1"/>
</dbReference>
<dbReference type="SMR" id="Q7MH57"/>
<dbReference type="STRING" id="672.VV93_v1c27430"/>
<dbReference type="MEROPS" id="T01.006"/>
<dbReference type="KEGG" id="vvy:VV3015"/>
<dbReference type="PATRIC" id="fig|196600.6.peg.2992"/>
<dbReference type="eggNOG" id="COG5405">
    <property type="taxonomic scope" value="Bacteria"/>
</dbReference>
<dbReference type="HOGENOM" id="CLU_093872_1_0_6"/>
<dbReference type="Proteomes" id="UP000002675">
    <property type="component" value="Chromosome I"/>
</dbReference>
<dbReference type="GO" id="GO:0009376">
    <property type="term" value="C:HslUV protease complex"/>
    <property type="evidence" value="ECO:0007669"/>
    <property type="project" value="UniProtKB-UniRule"/>
</dbReference>
<dbReference type="GO" id="GO:0005839">
    <property type="term" value="C:proteasome core complex"/>
    <property type="evidence" value="ECO:0007669"/>
    <property type="project" value="InterPro"/>
</dbReference>
<dbReference type="GO" id="GO:0046872">
    <property type="term" value="F:metal ion binding"/>
    <property type="evidence" value="ECO:0007669"/>
    <property type="project" value="UniProtKB-KW"/>
</dbReference>
<dbReference type="GO" id="GO:0004298">
    <property type="term" value="F:threonine-type endopeptidase activity"/>
    <property type="evidence" value="ECO:0007669"/>
    <property type="project" value="UniProtKB-KW"/>
</dbReference>
<dbReference type="GO" id="GO:0051603">
    <property type="term" value="P:proteolysis involved in protein catabolic process"/>
    <property type="evidence" value="ECO:0007669"/>
    <property type="project" value="InterPro"/>
</dbReference>
<dbReference type="CDD" id="cd01913">
    <property type="entry name" value="protease_HslV"/>
    <property type="match status" value="1"/>
</dbReference>
<dbReference type="FunFam" id="3.60.20.10:FF:000002">
    <property type="entry name" value="ATP-dependent protease subunit HslV"/>
    <property type="match status" value="1"/>
</dbReference>
<dbReference type="Gene3D" id="3.60.20.10">
    <property type="entry name" value="Glutamine Phosphoribosylpyrophosphate, subunit 1, domain 1"/>
    <property type="match status" value="1"/>
</dbReference>
<dbReference type="HAMAP" id="MF_00248">
    <property type="entry name" value="HslV"/>
    <property type="match status" value="1"/>
</dbReference>
<dbReference type="InterPro" id="IPR022281">
    <property type="entry name" value="ATP-dep_Prtase_HsIV_su"/>
</dbReference>
<dbReference type="InterPro" id="IPR029055">
    <property type="entry name" value="Ntn_hydrolases_N"/>
</dbReference>
<dbReference type="InterPro" id="IPR001353">
    <property type="entry name" value="Proteasome_sua/b"/>
</dbReference>
<dbReference type="InterPro" id="IPR023333">
    <property type="entry name" value="Proteasome_suB-type"/>
</dbReference>
<dbReference type="NCBIfam" id="TIGR03692">
    <property type="entry name" value="ATP_dep_HslV"/>
    <property type="match status" value="1"/>
</dbReference>
<dbReference type="NCBIfam" id="NF003964">
    <property type="entry name" value="PRK05456.1"/>
    <property type="match status" value="1"/>
</dbReference>
<dbReference type="PANTHER" id="PTHR32194:SF0">
    <property type="entry name" value="ATP-DEPENDENT PROTEASE SUBUNIT HSLV"/>
    <property type="match status" value="1"/>
</dbReference>
<dbReference type="PANTHER" id="PTHR32194">
    <property type="entry name" value="METALLOPROTEASE TLDD"/>
    <property type="match status" value="1"/>
</dbReference>
<dbReference type="Pfam" id="PF00227">
    <property type="entry name" value="Proteasome"/>
    <property type="match status" value="1"/>
</dbReference>
<dbReference type="PIRSF" id="PIRSF039093">
    <property type="entry name" value="HslV"/>
    <property type="match status" value="1"/>
</dbReference>
<dbReference type="SUPFAM" id="SSF56235">
    <property type="entry name" value="N-terminal nucleophile aminohydrolases (Ntn hydrolases)"/>
    <property type="match status" value="1"/>
</dbReference>
<dbReference type="PROSITE" id="PS51476">
    <property type="entry name" value="PROTEASOME_BETA_2"/>
    <property type="match status" value="1"/>
</dbReference>
<proteinExistence type="inferred from homology"/>
<sequence>MTTIVSVRRNNKVVIAGDGQVSLGNTVMKGNARKVRRLYNNKVLAGFAGGTADAFTLFERFESKLQMHQGHLTKAAVELAKDWRSDRALRKLEALLAVADETASLIITGNGDVVQPENDLIAIGSGGAYAQAAATALLENTELDAREIAEKALNIAGDICVFTNHNHTIEELEIPAELPNLSQA</sequence>
<evidence type="ECO:0000250" key="1"/>
<evidence type="ECO:0000255" key="2">
    <source>
        <dbReference type="HAMAP-Rule" id="MF_00248"/>
    </source>
</evidence>
<protein>
    <recommendedName>
        <fullName evidence="2">ATP-dependent protease subunit HslV</fullName>
        <ecNumber evidence="2">3.4.25.2</ecNumber>
    </recommendedName>
</protein>
<accession>Q7MH57</accession>
<keyword id="KW-0021">Allosteric enzyme</keyword>
<keyword id="KW-0963">Cytoplasm</keyword>
<keyword id="KW-0378">Hydrolase</keyword>
<keyword id="KW-0479">Metal-binding</keyword>
<keyword id="KW-0645">Protease</keyword>
<keyword id="KW-0915">Sodium</keyword>
<keyword id="KW-0888">Threonine protease</keyword>
<name>HSLV_VIBVY</name>
<reference key="1">
    <citation type="journal article" date="2003" name="Genome Res.">
        <title>Comparative genome analysis of Vibrio vulnificus, a marine pathogen.</title>
        <authorList>
            <person name="Chen C.-Y."/>
            <person name="Wu K.-M."/>
            <person name="Chang Y.-C."/>
            <person name="Chang C.-H."/>
            <person name="Tsai H.-C."/>
            <person name="Liao T.-L."/>
            <person name="Liu Y.-M."/>
            <person name="Chen H.-J."/>
            <person name="Shen A.B.-T."/>
            <person name="Li J.-C."/>
            <person name="Su T.-L."/>
            <person name="Shao C.-P."/>
            <person name="Lee C.-T."/>
            <person name="Hor L.-I."/>
            <person name="Tsai S.-F."/>
        </authorList>
    </citation>
    <scope>NUCLEOTIDE SEQUENCE [LARGE SCALE GENOMIC DNA]</scope>
    <source>
        <strain>YJ016</strain>
    </source>
</reference>
<organism>
    <name type="scientific">Vibrio vulnificus (strain YJ016)</name>
    <dbReference type="NCBI Taxonomy" id="196600"/>
    <lineage>
        <taxon>Bacteria</taxon>
        <taxon>Pseudomonadati</taxon>
        <taxon>Pseudomonadota</taxon>
        <taxon>Gammaproteobacteria</taxon>
        <taxon>Vibrionales</taxon>
        <taxon>Vibrionaceae</taxon>
        <taxon>Vibrio</taxon>
    </lineage>
</organism>
<gene>
    <name evidence="2" type="primary">hslV</name>
    <name type="ordered locus">VV3015</name>
</gene>
<feature type="initiator methionine" description="Removed" evidence="1">
    <location>
        <position position="1"/>
    </location>
</feature>
<feature type="chain" id="PRO_0000148160" description="ATP-dependent protease subunit HslV">
    <location>
        <begin position="2"/>
        <end position="184"/>
    </location>
</feature>
<feature type="active site" evidence="2">
    <location>
        <position position="2"/>
    </location>
</feature>
<feature type="binding site" evidence="2">
    <location>
        <position position="157"/>
    </location>
    <ligand>
        <name>Na(+)</name>
        <dbReference type="ChEBI" id="CHEBI:29101"/>
    </ligand>
</feature>
<feature type="binding site" evidence="2">
    <location>
        <position position="160"/>
    </location>
    <ligand>
        <name>Na(+)</name>
        <dbReference type="ChEBI" id="CHEBI:29101"/>
    </ligand>
</feature>
<feature type="binding site" evidence="2">
    <location>
        <position position="163"/>
    </location>
    <ligand>
        <name>Na(+)</name>
        <dbReference type="ChEBI" id="CHEBI:29101"/>
    </ligand>
</feature>